<keyword id="KW-0002">3D-structure</keyword>
<keyword id="KW-0007">Acetylation</keyword>
<keyword id="KW-0963">Cytoplasm</keyword>
<keyword id="KW-0539">Nucleus</keyword>
<keyword id="KW-1185">Reference proteome</keyword>
<keyword id="KW-0687">Ribonucleoprotein</keyword>
<keyword id="KW-0689">Ribosomal protein</keyword>
<evidence type="ECO:0000250" key="1">
    <source>
        <dbReference type="UniProtKB" id="P25398"/>
    </source>
</evidence>
<evidence type="ECO:0000250" key="2">
    <source>
        <dbReference type="UniProtKB" id="P63323"/>
    </source>
</evidence>
<evidence type="ECO:0000255" key="3">
    <source>
        <dbReference type="RuleBase" id="RU000670"/>
    </source>
</evidence>
<evidence type="ECO:0000269" key="4">
    <source>
    </source>
</evidence>
<evidence type="ECO:0000269" key="5">
    <source>
    </source>
</evidence>
<evidence type="ECO:0000269" key="6">
    <source>
    </source>
</evidence>
<evidence type="ECO:0000269" key="7">
    <source>
    </source>
</evidence>
<evidence type="ECO:0000269" key="8">
    <source>
    </source>
</evidence>
<evidence type="ECO:0000269" key="9">
    <source>
    </source>
</evidence>
<evidence type="ECO:0000269" key="10">
    <source>
    </source>
</evidence>
<evidence type="ECO:0000269" key="11">
    <source>
    </source>
</evidence>
<evidence type="ECO:0000269" key="12">
    <source>
    </source>
</evidence>
<evidence type="ECO:0000269" key="13">
    <source>
    </source>
</evidence>
<evidence type="ECO:0000269" key="14">
    <source>
    </source>
</evidence>
<evidence type="ECO:0000269" key="15">
    <source>
    </source>
</evidence>
<evidence type="ECO:0000269" key="16">
    <source>
    </source>
</evidence>
<evidence type="ECO:0000269" key="17">
    <source>
    </source>
</evidence>
<evidence type="ECO:0000269" key="18">
    <source>
    </source>
</evidence>
<evidence type="ECO:0000305" key="19"/>
<evidence type="ECO:0007744" key="20">
    <source>
        <dbReference type="PDB" id="3JAG"/>
    </source>
</evidence>
<evidence type="ECO:0007744" key="21">
    <source>
        <dbReference type="PDB" id="3JAH"/>
    </source>
</evidence>
<evidence type="ECO:0007744" key="22">
    <source>
        <dbReference type="PDB" id="4D5L"/>
    </source>
</evidence>
<evidence type="ECO:0007744" key="23">
    <source>
        <dbReference type="PDB" id="4D61"/>
    </source>
</evidence>
<evidence type="ECO:0007744" key="24">
    <source>
        <dbReference type="PDB" id="4KZX"/>
    </source>
</evidence>
<evidence type="ECO:0007744" key="25">
    <source>
        <dbReference type="PDB" id="4KZY"/>
    </source>
</evidence>
<evidence type="ECO:0007744" key="26">
    <source>
        <dbReference type="PDB" id="5LZS"/>
    </source>
</evidence>
<evidence type="ECO:0007744" key="27">
    <source>
        <dbReference type="PDB" id="5LZT"/>
    </source>
</evidence>
<evidence type="ECO:0007744" key="28">
    <source>
        <dbReference type="PDB" id="6D90"/>
    </source>
</evidence>
<evidence type="ECO:0007744" key="29">
    <source>
        <dbReference type="PDB" id="6D9J"/>
    </source>
</evidence>
<evidence type="ECO:0007744" key="30">
    <source>
        <dbReference type="PDB" id="6GZ3"/>
    </source>
</evidence>
<evidence type="ECO:0007744" key="31">
    <source>
        <dbReference type="PDB" id="6HCF"/>
    </source>
</evidence>
<evidence type="ECO:0007744" key="32">
    <source>
        <dbReference type="PDB" id="6HCJ"/>
    </source>
</evidence>
<evidence type="ECO:0007744" key="33">
    <source>
        <dbReference type="PDB" id="6MTB"/>
    </source>
</evidence>
<evidence type="ECO:0007744" key="34">
    <source>
        <dbReference type="PDB" id="6MTC"/>
    </source>
</evidence>
<evidence type="ECO:0007744" key="35">
    <source>
        <dbReference type="PDB" id="6P4G"/>
    </source>
</evidence>
<evidence type="ECO:0007744" key="36">
    <source>
        <dbReference type="PDB" id="6P4H"/>
    </source>
</evidence>
<evidence type="ECO:0007744" key="37">
    <source>
        <dbReference type="PDB" id="6R5Q"/>
    </source>
</evidence>
<evidence type="ECO:0007744" key="38">
    <source>
        <dbReference type="PDB" id="6R6G"/>
    </source>
</evidence>
<evidence type="ECO:0007744" key="39">
    <source>
        <dbReference type="PDB" id="6SGC"/>
    </source>
</evidence>
<evidence type="ECO:0007744" key="40">
    <source>
        <dbReference type="PDB" id="6W2S"/>
    </source>
</evidence>
<evidence type="ECO:0007744" key="41">
    <source>
        <dbReference type="PDB" id="6W2T"/>
    </source>
</evidence>
<evidence type="ECO:0007744" key="42">
    <source>
        <dbReference type="PDB" id="6ZVK"/>
    </source>
</evidence>
<evidence type="ECO:0007744" key="43">
    <source>
        <dbReference type="PDB" id="7A01"/>
    </source>
</evidence>
<evidence type="ECO:0007744" key="44">
    <source>
        <dbReference type="PDB" id="7SYI"/>
    </source>
</evidence>
<evidence type="ECO:0007744" key="45">
    <source>
        <dbReference type="PDB" id="7SYJ"/>
    </source>
</evidence>
<evidence type="ECO:0007744" key="46">
    <source>
        <dbReference type="PDB" id="7SYO"/>
    </source>
</evidence>
<evidence type="ECO:0007744" key="47">
    <source>
        <dbReference type="PDB" id="7SYP"/>
    </source>
</evidence>
<evidence type="ECO:0007744" key="48">
    <source>
        <dbReference type="PDB" id="7ZJW"/>
    </source>
</evidence>
<evidence type="ECO:0007744" key="49">
    <source>
        <dbReference type="PDB" id="7ZJX"/>
    </source>
</evidence>
<evidence type="ECO:0007829" key="50">
    <source>
        <dbReference type="PDB" id="6P4G"/>
    </source>
</evidence>
<evidence type="ECO:0007829" key="51">
    <source>
        <dbReference type="PDB" id="6P4H"/>
    </source>
</evidence>
<evidence type="ECO:0007829" key="52">
    <source>
        <dbReference type="PDB" id="6YAL"/>
    </source>
</evidence>
<evidence type="ECO:0007829" key="53">
    <source>
        <dbReference type="PDB" id="7JQB"/>
    </source>
</evidence>
<evidence type="ECO:0007829" key="54">
    <source>
        <dbReference type="PDB" id="7SYS"/>
    </source>
</evidence>
<evidence type="ECO:0007829" key="55">
    <source>
        <dbReference type="PDB" id="8P03"/>
    </source>
</evidence>
<name>RS12_RABIT</name>
<protein>
    <recommendedName>
        <fullName>Small ribosomal subunit protein eS12</fullName>
    </recommendedName>
    <alternativeName>
        <fullName evidence="3">40S ribosomal protein S12</fullName>
    </alternativeName>
</protein>
<proteinExistence type="evidence at protein level"/>
<dbReference type="EMBL" id="AAGW02028778">
    <property type="status" value="NOT_ANNOTATED_CDS"/>
    <property type="molecule type" value="Genomic_DNA"/>
</dbReference>
<dbReference type="RefSeq" id="XP_002714875.1">
    <property type="nucleotide sequence ID" value="XM_002714829.5"/>
</dbReference>
<dbReference type="PDB" id="3JAG">
    <property type="method" value="EM"/>
    <property type="resolution" value="3.65 A"/>
    <property type="chains" value="MM=9-132"/>
</dbReference>
<dbReference type="PDB" id="3JAH">
    <property type="method" value="EM"/>
    <property type="resolution" value="3.45 A"/>
    <property type="chains" value="MM=9-132"/>
</dbReference>
<dbReference type="PDB" id="3JAI">
    <property type="method" value="EM"/>
    <property type="resolution" value="3.65 A"/>
    <property type="chains" value="MM=9-132"/>
</dbReference>
<dbReference type="PDB" id="4D5L">
    <property type="method" value="EM"/>
    <property type="resolution" value="9.00 A"/>
    <property type="chains" value="M=1-132"/>
</dbReference>
<dbReference type="PDB" id="4D61">
    <property type="method" value="EM"/>
    <property type="resolution" value="9.00 A"/>
    <property type="chains" value="M=1-132"/>
</dbReference>
<dbReference type="PDB" id="4KZX">
    <property type="method" value="X-ray"/>
    <property type="resolution" value="7.81 A"/>
    <property type="chains" value="M=1-132"/>
</dbReference>
<dbReference type="PDB" id="4KZY">
    <property type="method" value="X-ray"/>
    <property type="resolution" value="7.01 A"/>
    <property type="chains" value="M=1-132"/>
</dbReference>
<dbReference type="PDB" id="4KZZ">
    <property type="method" value="X-ray"/>
    <property type="resolution" value="7.03 A"/>
    <property type="chains" value="M=1-132"/>
</dbReference>
<dbReference type="PDB" id="5K0Y">
    <property type="method" value="EM"/>
    <property type="resolution" value="5.80 A"/>
    <property type="chains" value="r=9-132"/>
</dbReference>
<dbReference type="PDB" id="5LZS">
    <property type="method" value="EM"/>
    <property type="resolution" value="3.31 A"/>
    <property type="chains" value="MM=1-132"/>
</dbReference>
<dbReference type="PDB" id="5LZT">
    <property type="method" value="EM"/>
    <property type="resolution" value="3.65 A"/>
    <property type="chains" value="MM=1-132"/>
</dbReference>
<dbReference type="PDB" id="5LZU">
    <property type="method" value="EM"/>
    <property type="resolution" value="3.75 A"/>
    <property type="chains" value="MM=1-132"/>
</dbReference>
<dbReference type="PDB" id="5LZV">
    <property type="method" value="EM"/>
    <property type="resolution" value="3.35 A"/>
    <property type="chains" value="MM=1-132"/>
</dbReference>
<dbReference type="PDB" id="5LZW">
    <property type="method" value="EM"/>
    <property type="resolution" value="3.53 A"/>
    <property type="chains" value="MM=1-132"/>
</dbReference>
<dbReference type="PDB" id="5LZX">
    <property type="method" value="EM"/>
    <property type="resolution" value="3.67 A"/>
    <property type="chains" value="MM=1-132"/>
</dbReference>
<dbReference type="PDB" id="5LZY">
    <property type="method" value="EM"/>
    <property type="resolution" value="3.99 A"/>
    <property type="chains" value="MM=1-132"/>
</dbReference>
<dbReference type="PDB" id="5LZZ">
    <property type="method" value="EM"/>
    <property type="resolution" value="3.47 A"/>
    <property type="chains" value="MM=1-132"/>
</dbReference>
<dbReference type="PDB" id="6D90">
    <property type="method" value="EM"/>
    <property type="resolution" value="3.20 A"/>
    <property type="chains" value="NN=1-132"/>
</dbReference>
<dbReference type="PDB" id="6D9J">
    <property type="method" value="EM"/>
    <property type="resolution" value="3.20 A"/>
    <property type="chains" value="NN=1-132"/>
</dbReference>
<dbReference type="PDB" id="6GZ3">
    <property type="method" value="EM"/>
    <property type="resolution" value="3.60 A"/>
    <property type="chains" value="BM=11-130"/>
</dbReference>
<dbReference type="PDB" id="6HCF">
    <property type="method" value="EM"/>
    <property type="resolution" value="3.90 A"/>
    <property type="chains" value="N1=1-132"/>
</dbReference>
<dbReference type="PDB" id="6HCJ">
    <property type="method" value="EM"/>
    <property type="resolution" value="3.80 A"/>
    <property type="chains" value="N2=1-132"/>
</dbReference>
<dbReference type="PDB" id="6HCM">
    <property type="method" value="EM"/>
    <property type="resolution" value="6.80 A"/>
    <property type="chains" value="N1=1-132"/>
</dbReference>
<dbReference type="PDB" id="6HCQ">
    <property type="method" value="EM"/>
    <property type="resolution" value="6.50 A"/>
    <property type="chains" value="N2=1-132"/>
</dbReference>
<dbReference type="PDB" id="6MTB">
    <property type="method" value="EM"/>
    <property type="resolution" value="3.60 A"/>
    <property type="chains" value="MM=14-130"/>
</dbReference>
<dbReference type="PDB" id="6MTC">
    <property type="method" value="EM"/>
    <property type="resolution" value="3.40 A"/>
    <property type="chains" value="MM=14-130"/>
</dbReference>
<dbReference type="PDB" id="6MTD">
    <property type="method" value="EM"/>
    <property type="resolution" value="3.30 A"/>
    <property type="chains" value="MM=14-130"/>
</dbReference>
<dbReference type="PDB" id="6MTE">
    <property type="method" value="EM"/>
    <property type="resolution" value="3.40 A"/>
    <property type="chains" value="MM=14-130"/>
</dbReference>
<dbReference type="PDB" id="6P4G">
    <property type="method" value="EM"/>
    <property type="resolution" value="3.10 A"/>
    <property type="chains" value="N=1-132"/>
</dbReference>
<dbReference type="PDB" id="6P4H">
    <property type="method" value="EM"/>
    <property type="resolution" value="3.20 A"/>
    <property type="chains" value="N=1-132"/>
</dbReference>
<dbReference type="PDB" id="6P5I">
    <property type="method" value="EM"/>
    <property type="resolution" value="3.10 A"/>
    <property type="chains" value="N=1-132"/>
</dbReference>
<dbReference type="PDB" id="6P5J">
    <property type="method" value="EM"/>
    <property type="resolution" value="3.10 A"/>
    <property type="chains" value="N=1-132"/>
</dbReference>
<dbReference type="PDB" id="6P5K">
    <property type="method" value="EM"/>
    <property type="resolution" value="3.10 A"/>
    <property type="chains" value="N=1-132"/>
</dbReference>
<dbReference type="PDB" id="6P5N">
    <property type="method" value="EM"/>
    <property type="resolution" value="3.20 A"/>
    <property type="chains" value="N=1-132"/>
</dbReference>
<dbReference type="PDB" id="6R5Q">
    <property type="method" value="EM"/>
    <property type="resolution" value="3.00 A"/>
    <property type="chains" value="RR=14-130"/>
</dbReference>
<dbReference type="PDB" id="6R6G">
    <property type="method" value="EM"/>
    <property type="resolution" value="3.70 A"/>
    <property type="chains" value="RR=14-130"/>
</dbReference>
<dbReference type="PDB" id="6R6P">
    <property type="method" value="EM"/>
    <property type="resolution" value="3.10 A"/>
    <property type="chains" value="RR=14-130"/>
</dbReference>
<dbReference type="PDB" id="6R7Q">
    <property type="method" value="EM"/>
    <property type="resolution" value="3.90 A"/>
    <property type="chains" value="RR=14-130"/>
</dbReference>
<dbReference type="PDB" id="6SGC">
    <property type="method" value="EM"/>
    <property type="resolution" value="2.80 A"/>
    <property type="chains" value="N1=1-132"/>
</dbReference>
<dbReference type="PDB" id="6W2S">
    <property type="method" value="EM"/>
    <property type="resolution" value="3.00 A"/>
    <property type="chains" value="N=1-132"/>
</dbReference>
<dbReference type="PDB" id="6W2T">
    <property type="method" value="EM"/>
    <property type="resolution" value="3.36 A"/>
    <property type="chains" value="N=1-132"/>
</dbReference>
<dbReference type="PDB" id="6YAL">
    <property type="method" value="EM"/>
    <property type="resolution" value="3.00 A"/>
    <property type="chains" value="O=1-132"/>
</dbReference>
<dbReference type="PDB" id="6YAM">
    <property type="method" value="EM"/>
    <property type="resolution" value="3.60 A"/>
    <property type="chains" value="O=1-132"/>
</dbReference>
<dbReference type="PDB" id="6YAN">
    <property type="method" value="EM"/>
    <property type="resolution" value="3.48 A"/>
    <property type="chains" value="O=9-132"/>
</dbReference>
<dbReference type="PDB" id="6ZVK">
    <property type="method" value="EM"/>
    <property type="resolution" value="3.49 A"/>
    <property type="chains" value="e3=9-132"/>
</dbReference>
<dbReference type="PDB" id="7A01">
    <property type="method" value="EM"/>
    <property type="resolution" value="3.60 A"/>
    <property type="chains" value="e3=9-132"/>
</dbReference>
<dbReference type="PDB" id="7JQB">
    <property type="method" value="EM"/>
    <property type="resolution" value="2.70 A"/>
    <property type="chains" value="N=1-132"/>
</dbReference>
<dbReference type="PDB" id="7JQC">
    <property type="method" value="EM"/>
    <property type="resolution" value="3.30 A"/>
    <property type="chains" value="N=1-132"/>
</dbReference>
<dbReference type="PDB" id="7MDZ">
    <property type="method" value="EM"/>
    <property type="resolution" value="3.20 A"/>
    <property type="chains" value="MM=1-132"/>
</dbReference>
<dbReference type="PDB" id="7NWG">
    <property type="method" value="EM"/>
    <property type="resolution" value="3.80 A"/>
    <property type="chains" value="N2=10-132"/>
</dbReference>
<dbReference type="PDB" id="7NWH">
    <property type="method" value="EM"/>
    <property type="resolution" value="4.10 A"/>
    <property type="chains" value="MM=10-132"/>
</dbReference>
<dbReference type="PDB" id="7NWI">
    <property type="method" value="EM"/>
    <property type="resolution" value="3.13 A"/>
    <property type="chains" value="MM=9-132"/>
</dbReference>
<dbReference type="PDB" id="7O7Y">
    <property type="method" value="EM"/>
    <property type="resolution" value="2.20 A"/>
    <property type="chains" value="Al=1-132"/>
</dbReference>
<dbReference type="PDB" id="7O7Z">
    <property type="method" value="EM"/>
    <property type="resolution" value="2.40 A"/>
    <property type="chains" value="Al=1-132"/>
</dbReference>
<dbReference type="PDB" id="7O80">
    <property type="method" value="EM"/>
    <property type="resolution" value="2.90 A"/>
    <property type="chains" value="Al=1-132"/>
</dbReference>
<dbReference type="PDB" id="7O81">
    <property type="method" value="EM"/>
    <property type="resolution" value="3.10 A"/>
    <property type="chains" value="Al=1-132"/>
</dbReference>
<dbReference type="PDB" id="7SYG">
    <property type="method" value="EM"/>
    <property type="resolution" value="4.30 A"/>
    <property type="chains" value="N=1-132"/>
</dbReference>
<dbReference type="PDB" id="7SYH">
    <property type="method" value="EM"/>
    <property type="resolution" value="4.60 A"/>
    <property type="chains" value="N=1-132"/>
</dbReference>
<dbReference type="PDB" id="7SYI">
    <property type="method" value="EM"/>
    <property type="resolution" value="4.50 A"/>
    <property type="chains" value="N=1-132"/>
</dbReference>
<dbReference type="PDB" id="7SYJ">
    <property type="method" value="EM"/>
    <property type="resolution" value="4.80 A"/>
    <property type="chains" value="N=1-132"/>
</dbReference>
<dbReference type="PDB" id="7SYK">
    <property type="method" value="EM"/>
    <property type="resolution" value="4.20 A"/>
    <property type="chains" value="N=1-132"/>
</dbReference>
<dbReference type="PDB" id="7SYL">
    <property type="method" value="EM"/>
    <property type="resolution" value="4.50 A"/>
    <property type="chains" value="N=1-132"/>
</dbReference>
<dbReference type="PDB" id="7SYM">
    <property type="method" value="EM"/>
    <property type="resolution" value="4.80 A"/>
    <property type="chains" value="N=1-132"/>
</dbReference>
<dbReference type="PDB" id="7SYN">
    <property type="method" value="EM"/>
    <property type="resolution" value="4.00 A"/>
    <property type="chains" value="N=1-132"/>
</dbReference>
<dbReference type="PDB" id="7SYO">
    <property type="method" value="EM"/>
    <property type="resolution" value="4.60 A"/>
    <property type="chains" value="N=1-132"/>
</dbReference>
<dbReference type="PDB" id="7SYP">
    <property type="method" value="EM"/>
    <property type="resolution" value="4.00 A"/>
    <property type="chains" value="N=1-132"/>
</dbReference>
<dbReference type="PDB" id="7SYQ">
    <property type="method" value="EM"/>
    <property type="resolution" value="3.80 A"/>
    <property type="chains" value="N=1-132"/>
</dbReference>
<dbReference type="PDB" id="7SYR">
    <property type="method" value="EM"/>
    <property type="resolution" value="3.60 A"/>
    <property type="chains" value="N=1-132"/>
</dbReference>
<dbReference type="PDB" id="7SYS">
    <property type="method" value="EM"/>
    <property type="resolution" value="3.50 A"/>
    <property type="chains" value="N=1-132"/>
</dbReference>
<dbReference type="PDB" id="7SYT">
    <property type="method" value="EM"/>
    <property type="resolution" value="4.40 A"/>
    <property type="chains" value="N=1-132"/>
</dbReference>
<dbReference type="PDB" id="7SYU">
    <property type="method" value="EM"/>
    <property type="resolution" value="4.60 A"/>
    <property type="chains" value="N=1-132"/>
</dbReference>
<dbReference type="PDB" id="7SYV">
    <property type="method" value="EM"/>
    <property type="resolution" value="3.90 A"/>
    <property type="chains" value="N=1-132"/>
</dbReference>
<dbReference type="PDB" id="7SYW">
    <property type="method" value="EM"/>
    <property type="resolution" value="3.70 A"/>
    <property type="chains" value="N=1-132"/>
</dbReference>
<dbReference type="PDB" id="7SYX">
    <property type="method" value="EM"/>
    <property type="resolution" value="3.70 A"/>
    <property type="chains" value="N=1-132"/>
</dbReference>
<dbReference type="PDB" id="7TOQ">
    <property type="method" value="EM"/>
    <property type="resolution" value="3.10 A"/>
    <property type="chains" value="AS12=14-130"/>
</dbReference>
<dbReference type="PDB" id="7TOR">
    <property type="method" value="EM"/>
    <property type="resolution" value="2.90 A"/>
    <property type="chains" value="AS12=14-130"/>
</dbReference>
<dbReference type="PDB" id="7ZJW">
    <property type="method" value="EM"/>
    <property type="resolution" value="2.80 A"/>
    <property type="chains" value="SX=1-132"/>
</dbReference>
<dbReference type="PDB" id="7ZJX">
    <property type="method" value="EM"/>
    <property type="resolution" value="3.10 A"/>
    <property type="chains" value="SX=1-132"/>
</dbReference>
<dbReference type="PDB" id="8BHF">
    <property type="method" value="EM"/>
    <property type="resolution" value="3.10 A"/>
    <property type="chains" value="N3=14-130"/>
</dbReference>
<dbReference type="PDB" id="8BTK">
    <property type="method" value="EM"/>
    <property type="resolution" value="3.50 A"/>
    <property type="chains" value="Al=1-132"/>
</dbReference>
<dbReference type="PDB" id="8P03">
    <property type="method" value="EM"/>
    <property type="resolution" value="3.04 A"/>
    <property type="chains" value="O=1-132"/>
</dbReference>
<dbReference type="PDB" id="8P09">
    <property type="method" value="EM"/>
    <property type="resolution" value="3.30 A"/>
    <property type="chains" value="O=1-132"/>
</dbReference>
<dbReference type="PDB" id="8P2K">
    <property type="method" value="EM"/>
    <property type="resolution" value="2.90 A"/>
    <property type="chains" value="Al=1-132"/>
</dbReference>
<dbReference type="PDB" id="8SCB">
    <property type="method" value="EM"/>
    <property type="resolution" value="2.50 A"/>
    <property type="chains" value="MM=1-132"/>
</dbReference>
<dbReference type="PDB" id="8VFT">
    <property type="method" value="EM"/>
    <property type="resolution" value="3.30 A"/>
    <property type="chains" value="MM=1-132"/>
</dbReference>
<dbReference type="PDB" id="9BDL">
    <property type="method" value="EM"/>
    <property type="resolution" value="2.80 A"/>
    <property type="chains" value="AS12=14-130"/>
</dbReference>
<dbReference type="PDB" id="9BDN">
    <property type="method" value="EM"/>
    <property type="resolution" value="3.10 A"/>
    <property type="chains" value="AS12=14-130"/>
</dbReference>
<dbReference type="PDB" id="9BDP">
    <property type="method" value="EM"/>
    <property type="resolution" value="3.70 A"/>
    <property type="chains" value="AS12=14-130"/>
</dbReference>
<dbReference type="PDB" id="9C8K">
    <property type="method" value="EM"/>
    <property type="resolution" value="3.10 A"/>
    <property type="chains" value="M=1-132"/>
</dbReference>
<dbReference type="PDB" id="9F1B">
    <property type="method" value="EM"/>
    <property type="resolution" value="3.01 A"/>
    <property type="chains" value="Al=1-132"/>
</dbReference>
<dbReference type="PDB" id="9F1C">
    <property type="method" value="EM"/>
    <property type="resolution" value="3.78 A"/>
    <property type="chains" value="Al=1-132"/>
</dbReference>
<dbReference type="PDB" id="9F1D">
    <property type="method" value="EM"/>
    <property type="resolution" value="3.26 A"/>
    <property type="chains" value="Al=1-132"/>
</dbReference>
<dbReference type="PDBsum" id="3JAG"/>
<dbReference type="PDBsum" id="3JAH"/>
<dbReference type="PDBsum" id="3JAI"/>
<dbReference type="PDBsum" id="4D5L"/>
<dbReference type="PDBsum" id="4D61"/>
<dbReference type="PDBsum" id="4KZX"/>
<dbReference type="PDBsum" id="4KZY"/>
<dbReference type="PDBsum" id="4KZZ"/>
<dbReference type="PDBsum" id="5K0Y"/>
<dbReference type="PDBsum" id="5LZS"/>
<dbReference type="PDBsum" id="5LZT"/>
<dbReference type="PDBsum" id="5LZU"/>
<dbReference type="PDBsum" id="5LZV"/>
<dbReference type="PDBsum" id="5LZW"/>
<dbReference type="PDBsum" id="5LZX"/>
<dbReference type="PDBsum" id="5LZY"/>
<dbReference type="PDBsum" id="5LZZ"/>
<dbReference type="PDBsum" id="6D90"/>
<dbReference type="PDBsum" id="6D9J"/>
<dbReference type="PDBsum" id="6GZ3"/>
<dbReference type="PDBsum" id="6HCF"/>
<dbReference type="PDBsum" id="6HCJ"/>
<dbReference type="PDBsum" id="6HCM"/>
<dbReference type="PDBsum" id="6HCQ"/>
<dbReference type="PDBsum" id="6MTB"/>
<dbReference type="PDBsum" id="6MTC"/>
<dbReference type="PDBsum" id="6MTD"/>
<dbReference type="PDBsum" id="6MTE"/>
<dbReference type="PDBsum" id="6P4G"/>
<dbReference type="PDBsum" id="6P4H"/>
<dbReference type="PDBsum" id="6P5I"/>
<dbReference type="PDBsum" id="6P5J"/>
<dbReference type="PDBsum" id="6P5K"/>
<dbReference type="PDBsum" id="6P5N"/>
<dbReference type="PDBsum" id="6R5Q"/>
<dbReference type="PDBsum" id="6R6G"/>
<dbReference type="PDBsum" id="6R6P"/>
<dbReference type="PDBsum" id="6R7Q"/>
<dbReference type="PDBsum" id="6SGC"/>
<dbReference type="PDBsum" id="6W2S"/>
<dbReference type="PDBsum" id="6W2T"/>
<dbReference type="PDBsum" id="6YAL"/>
<dbReference type="PDBsum" id="6YAM"/>
<dbReference type="PDBsum" id="6YAN"/>
<dbReference type="PDBsum" id="6ZVK"/>
<dbReference type="PDBsum" id="7A01"/>
<dbReference type="PDBsum" id="7JQB"/>
<dbReference type="PDBsum" id="7JQC"/>
<dbReference type="PDBsum" id="7MDZ"/>
<dbReference type="PDBsum" id="7NWG"/>
<dbReference type="PDBsum" id="7NWH"/>
<dbReference type="PDBsum" id="7NWI"/>
<dbReference type="PDBsum" id="7O7Y"/>
<dbReference type="PDBsum" id="7O7Z"/>
<dbReference type="PDBsum" id="7O80"/>
<dbReference type="PDBsum" id="7O81"/>
<dbReference type="PDBsum" id="7SYG"/>
<dbReference type="PDBsum" id="7SYH"/>
<dbReference type="PDBsum" id="7SYI"/>
<dbReference type="PDBsum" id="7SYJ"/>
<dbReference type="PDBsum" id="7SYK"/>
<dbReference type="PDBsum" id="7SYL"/>
<dbReference type="PDBsum" id="7SYM"/>
<dbReference type="PDBsum" id="7SYN"/>
<dbReference type="PDBsum" id="7SYO"/>
<dbReference type="PDBsum" id="7SYP"/>
<dbReference type="PDBsum" id="7SYQ"/>
<dbReference type="PDBsum" id="7SYR"/>
<dbReference type="PDBsum" id="7SYS"/>
<dbReference type="PDBsum" id="7SYT"/>
<dbReference type="PDBsum" id="7SYU"/>
<dbReference type="PDBsum" id="7SYV"/>
<dbReference type="PDBsum" id="7SYW"/>
<dbReference type="PDBsum" id="7SYX"/>
<dbReference type="PDBsum" id="7TOQ"/>
<dbReference type="PDBsum" id="7TOR"/>
<dbReference type="PDBsum" id="7ZJW"/>
<dbReference type="PDBsum" id="7ZJX"/>
<dbReference type="PDBsum" id="8BHF"/>
<dbReference type="PDBsum" id="8BTK"/>
<dbReference type="PDBsum" id="8P03"/>
<dbReference type="PDBsum" id="8P09"/>
<dbReference type="PDBsum" id="8P2K"/>
<dbReference type="PDBsum" id="8SCB"/>
<dbReference type="PDBsum" id="8VFT"/>
<dbReference type="PDBsum" id="9BDL"/>
<dbReference type="PDBsum" id="9BDN"/>
<dbReference type="PDBsum" id="9BDP"/>
<dbReference type="PDBsum" id="9C8K"/>
<dbReference type="PDBsum" id="9F1B"/>
<dbReference type="PDBsum" id="9F1C"/>
<dbReference type="PDBsum" id="9F1D"/>
<dbReference type="EMDB" id="EMD-0098"/>
<dbReference type="EMDB" id="EMD-0099"/>
<dbReference type="EMDB" id="EMD-0100"/>
<dbReference type="EMDB" id="EMD-0192"/>
<dbReference type="EMDB" id="EMD-0194"/>
<dbReference type="EMDB" id="EMD-0195"/>
<dbReference type="EMDB" id="EMD-0197"/>
<dbReference type="EMDB" id="EMD-10181"/>
<dbReference type="EMDB" id="EMD-10760"/>
<dbReference type="EMDB" id="EMD-10761"/>
<dbReference type="EMDB" id="EMD-10762"/>
<dbReference type="EMDB" id="EMD-11459"/>
<dbReference type="EMDB" id="EMD-11590"/>
<dbReference type="EMDB" id="EMD-12631"/>
<dbReference type="EMDB" id="EMD-12632"/>
<dbReference type="EMDB" id="EMD-12633"/>
<dbReference type="EMDB" id="EMD-12756"/>
<dbReference type="EMDB" id="EMD-12757"/>
<dbReference type="EMDB" id="EMD-12758"/>
<dbReference type="EMDB" id="EMD-12759"/>
<dbReference type="EMDB" id="EMD-14751"/>
<dbReference type="EMDB" id="EMD-14752"/>
<dbReference type="EMDB" id="EMD-16052"/>
<dbReference type="EMDB" id="EMD-16232"/>
<dbReference type="EMDB" id="EMD-17329"/>
<dbReference type="EMDB" id="EMD-17330"/>
<dbReference type="EMDB" id="EMD-17367"/>
<dbReference type="EMDB" id="EMD-20248"/>
<dbReference type="EMDB" id="EMD-20249"/>
<dbReference type="EMDB" id="EMD-20255"/>
<dbReference type="EMDB" id="EMD-20256"/>
<dbReference type="EMDB" id="EMD-20257"/>
<dbReference type="EMDB" id="EMD-20258"/>
<dbReference type="EMDB" id="EMD-21529"/>
<dbReference type="EMDB" id="EMD-21530"/>
<dbReference type="EMDB" id="EMD-22432"/>
<dbReference type="EMDB" id="EMD-22433"/>
<dbReference type="EMDB" id="EMD-23785"/>
<dbReference type="EMDB" id="EMD-25527"/>
<dbReference type="EMDB" id="EMD-25528"/>
<dbReference type="EMDB" id="EMD-25529"/>
<dbReference type="EMDB" id="EMD-25530"/>
<dbReference type="EMDB" id="EMD-25531"/>
<dbReference type="EMDB" id="EMD-25532"/>
<dbReference type="EMDB" id="EMD-25533"/>
<dbReference type="EMDB" id="EMD-25534"/>
<dbReference type="EMDB" id="EMD-25535"/>
<dbReference type="EMDB" id="EMD-25536"/>
<dbReference type="EMDB" id="EMD-25537"/>
<dbReference type="EMDB" id="EMD-25538"/>
<dbReference type="EMDB" id="EMD-25539"/>
<dbReference type="EMDB" id="EMD-25540"/>
<dbReference type="EMDB" id="EMD-25541"/>
<dbReference type="EMDB" id="EMD-25542"/>
<dbReference type="EMDB" id="EMD-25543"/>
<dbReference type="EMDB" id="EMD-25544"/>
<dbReference type="EMDB" id="EMD-26035"/>
<dbReference type="EMDB" id="EMD-26036"/>
<dbReference type="EMDB" id="EMD-40344"/>
<dbReference type="EMDB" id="EMD-4130"/>
<dbReference type="EMDB" id="EMD-4131"/>
<dbReference type="EMDB" id="EMD-4132"/>
<dbReference type="EMDB" id="EMD-4133"/>
<dbReference type="EMDB" id="EMD-4134"/>
<dbReference type="EMDB" id="EMD-4135"/>
<dbReference type="EMDB" id="EMD-4136"/>
<dbReference type="EMDB" id="EMD-4137"/>
<dbReference type="EMDB" id="EMD-43189"/>
<dbReference type="EMDB" id="EMD-44461"/>
<dbReference type="EMDB" id="EMD-44463"/>
<dbReference type="EMDB" id="EMD-44464"/>
<dbReference type="EMDB" id="EMD-45307"/>
<dbReference type="EMDB" id="EMD-4729"/>
<dbReference type="EMDB" id="EMD-4735"/>
<dbReference type="EMDB" id="EMD-4737"/>
<dbReference type="EMDB" id="EMD-4745"/>
<dbReference type="EMDB" id="EMD-50124"/>
<dbReference type="EMDB" id="EMD-50125"/>
<dbReference type="EMDB" id="EMD-50126"/>
<dbReference type="EMDB" id="EMD-7834"/>
<dbReference type="EMDB" id="EMD-7836"/>
<dbReference type="EMDB" id="EMD-8190"/>
<dbReference type="EMDB" id="EMD-9237"/>
<dbReference type="EMDB" id="EMD-9239"/>
<dbReference type="EMDB" id="EMD-9240"/>
<dbReference type="EMDB" id="EMD-9242"/>
<dbReference type="SMR" id="G1SFR8"/>
<dbReference type="FunCoup" id="G1SFR8">
    <property type="interactions" value="1563"/>
</dbReference>
<dbReference type="IntAct" id="G1SFR8">
    <property type="interactions" value="1"/>
</dbReference>
<dbReference type="STRING" id="9986.ENSOCUP00000001378"/>
<dbReference type="PaxDb" id="9986-ENSOCUP00000001378"/>
<dbReference type="Ensembl" id="ENSOCUT00000001606.4">
    <property type="protein sequence ID" value="ENSOCUP00000001378.2"/>
    <property type="gene ID" value="ENSOCUG00000001606.4"/>
</dbReference>
<dbReference type="GeneID" id="100345945"/>
<dbReference type="KEGG" id="ocu:100345945"/>
<dbReference type="CTD" id="6206"/>
<dbReference type="eggNOG" id="KOG3406">
    <property type="taxonomic scope" value="Eukaryota"/>
</dbReference>
<dbReference type="GeneTree" id="ENSGT00390000018318"/>
<dbReference type="HOGENOM" id="CLU_110343_1_1_1"/>
<dbReference type="InParanoid" id="G1SFR8"/>
<dbReference type="OMA" id="CAEHQIP"/>
<dbReference type="OrthoDB" id="10249311at2759"/>
<dbReference type="TreeFam" id="TF300196"/>
<dbReference type="EvolutionaryTrace" id="G1SFR8"/>
<dbReference type="Proteomes" id="UP000001811">
    <property type="component" value="Chromosome 12"/>
</dbReference>
<dbReference type="Bgee" id="ENSOCUG00000001606">
    <property type="expression patterns" value="Expressed in upper lobe of left lung and 15 other cell types or tissues"/>
</dbReference>
<dbReference type="GO" id="GO:0022626">
    <property type="term" value="C:cytosolic ribosome"/>
    <property type="evidence" value="ECO:0000314"/>
    <property type="project" value="UniProtKB"/>
</dbReference>
<dbReference type="GO" id="GO:0022627">
    <property type="term" value="C:cytosolic small ribosomal subunit"/>
    <property type="evidence" value="ECO:0007669"/>
    <property type="project" value="Ensembl"/>
</dbReference>
<dbReference type="GO" id="GO:0005794">
    <property type="term" value="C:Golgi apparatus"/>
    <property type="evidence" value="ECO:0007669"/>
    <property type="project" value="Ensembl"/>
</dbReference>
<dbReference type="GO" id="GO:0005730">
    <property type="term" value="C:nucleolus"/>
    <property type="evidence" value="ECO:0007669"/>
    <property type="project" value="UniProtKB-SubCell"/>
</dbReference>
<dbReference type="GO" id="GO:0032040">
    <property type="term" value="C:small-subunit processome"/>
    <property type="evidence" value="ECO:0007669"/>
    <property type="project" value="Ensembl"/>
</dbReference>
<dbReference type="GO" id="GO:0003735">
    <property type="term" value="F:structural constituent of ribosome"/>
    <property type="evidence" value="ECO:0000314"/>
    <property type="project" value="UniProtKB"/>
</dbReference>
<dbReference type="GO" id="GO:0090263">
    <property type="term" value="P:positive regulation of canonical Wnt signaling pathway"/>
    <property type="evidence" value="ECO:0007669"/>
    <property type="project" value="Ensembl"/>
</dbReference>
<dbReference type="GO" id="GO:0042274">
    <property type="term" value="P:ribosomal small subunit biogenesis"/>
    <property type="evidence" value="ECO:0007669"/>
    <property type="project" value="Ensembl"/>
</dbReference>
<dbReference type="GO" id="GO:0006412">
    <property type="term" value="P:translation"/>
    <property type="evidence" value="ECO:0007669"/>
    <property type="project" value="InterPro"/>
</dbReference>
<dbReference type="FunFam" id="3.30.1330.30:FF:000011">
    <property type="entry name" value="40S ribosomal protein S12"/>
    <property type="match status" value="1"/>
</dbReference>
<dbReference type="Gene3D" id="3.30.1330.30">
    <property type="match status" value="1"/>
</dbReference>
<dbReference type="InterPro" id="IPR029064">
    <property type="entry name" value="Ribosomal_eL30-like_sf"/>
</dbReference>
<dbReference type="InterPro" id="IPR004038">
    <property type="entry name" value="Ribosomal_eL8/eL30/eS12/Gad45"/>
</dbReference>
<dbReference type="InterPro" id="IPR000530">
    <property type="entry name" value="Ribosomal_eS12"/>
</dbReference>
<dbReference type="InterPro" id="IPR047860">
    <property type="entry name" value="Ribosomal_eS12_CS"/>
</dbReference>
<dbReference type="PANTHER" id="PTHR11843">
    <property type="entry name" value="40S RIBOSOMAL PROTEIN S12"/>
    <property type="match status" value="1"/>
</dbReference>
<dbReference type="Pfam" id="PF01248">
    <property type="entry name" value="Ribosomal_L7Ae"/>
    <property type="match status" value="1"/>
</dbReference>
<dbReference type="PRINTS" id="PR00972">
    <property type="entry name" value="RIBSOMALS12E"/>
</dbReference>
<dbReference type="SUPFAM" id="SSF55315">
    <property type="entry name" value="L30e-like"/>
    <property type="match status" value="1"/>
</dbReference>
<dbReference type="PROSITE" id="PS01189">
    <property type="entry name" value="RIBOSOMAL_S12E"/>
    <property type="match status" value="1"/>
</dbReference>
<organism>
    <name type="scientific">Oryctolagus cuniculus</name>
    <name type="common">Rabbit</name>
    <dbReference type="NCBI Taxonomy" id="9986"/>
    <lineage>
        <taxon>Eukaryota</taxon>
        <taxon>Metazoa</taxon>
        <taxon>Chordata</taxon>
        <taxon>Craniata</taxon>
        <taxon>Vertebrata</taxon>
        <taxon>Euteleostomi</taxon>
        <taxon>Mammalia</taxon>
        <taxon>Eutheria</taxon>
        <taxon>Euarchontoglires</taxon>
        <taxon>Glires</taxon>
        <taxon>Lagomorpha</taxon>
        <taxon>Leporidae</taxon>
        <taxon>Oryctolagus</taxon>
    </lineage>
</organism>
<sequence>MAEEGIAAGGVMDVNTALQEVLKTALIHDGLARGIREAAKALDKRQAHLCVLASNCDEPMYVKLVEALCAEHQINLIKVDDNKKLGEWVGLCKIDREGKPRKVVGCSCVVVKDYGKESQAKDVIEEYFKCKK</sequence>
<gene>
    <name type="primary">RPS12</name>
</gene>
<comment type="function">
    <text evidence="4 5 6 7 11">Part of the small subunit (SSU) processome, first precursor of the small eukaryotic ribosomal subunit (PubMed:23873042, PubMed:25601755, PubMed:26245381, PubMed:27863242, PubMed:30517857). During the assembly of the SSU processome in the nucleolus, many ribosome biogenesis factors, an RNA chaperone and ribosomal proteins associate with the nascent pre-rRNA and work in concert to generate RNA folding, modifications, rearrangements and cleavage as well as targeted degradation of pre-ribosomal RNA by the RNA exosome (PubMed:23873042, PubMed:25601755, PubMed:26245381, PubMed:27863242, PubMed:30517857). Subunit of the 40S ribosomal complex (PubMed:23873042, PubMed:25601755, PubMed:26245381, PubMed:27863242, PubMed:30517857).</text>
</comment>
<comment type="subunit">
    <text evidence="4 5 6 7 8 9 10 11 12 13 14 15 16 17 18">Part of the small subunit (SSU) processome, composed of more than 70 proteins and the RNA chaperone small nucleolar RNA (snoRNA) U3 (PubMed:23873042, PubMed:25601755, PubMed:26245381, PubMed:27863242, PubMed:29856316, PubMed:30293783, PubMed:30355441, PubMed:30517857, PubMed:31246176, PubMed:31609474, PubMed:31768042, PubMed:32286223, PubMed:33296660, PubMed:35709277, PubMed:35822879). Subunit of the 40S ribosomal complex (PubMed:23873042, PubMed:25601755, PubMed:26245381, PubMed:27863242, PubMed:29856316, PubMed:30293783, PubMed:30355441, PubMed:30517857, PubMed:31246176, PubMed:31609474, PubMed:31768042, PubMed:32286223, PubMed:33296660, PubMed:35709277, PubMed:35822879).</text>
</comment>
<comment type="subcellular location">
    <subcellularLocation>
        <location evidence="4 5 6 7 8 9 10 11 12 13 14 15 16 17 18">Cytoplasm</location>
    </subcellularLocation>
    <subcellularLocation>
        <location evidence="1">Nucleus</location>
        <location evidence="1">Nucleolus</location>
    </subcellularLocation>
</comment>
<comment type="similarity">
    <text evidence="19">Belongs to the eukaryotic ribosomal protein eS12 family.</text>
</comment>
<reference key="1">
    <citation type="journal article" date="2011" name="Nature">
        <title>A high-resolution map of human evolutionary constraint using 29 mammals.</title>
        <authorList>
            <person name="Lindblad-Toh K."/>
            <person name="Garber M."/>
            <person name="Zuk O."/>
            <person name="Lin M.F."/>
            <person name="Parker B.J."/>
            <person name="Washietl S."/>
            <person name="Kheradpour P."/>
            <person name="Ernst J."/>
            <person name="Jordan G."/>
            <person name="Mauceli E."/>
            <person name="Ward L.D."/>
            <person name="Lowe C.B."/>
            <person name="Holloway A.K."/>
            <person name="Clamp M."/>
            <person name="Gnerre S."/>
            <person name="Alfoldi J."/>
            <person name="Beal K."/>
            <person name="Chang J."/>
            <person name="Clawson H."/>
            <person name="Cuff J."/>
            <person name="Di Palma F."/>
            <person name="Fitzgerald S."/>
            <person name="Flicek P."/>
            <person name="Guttman M."/>
            <person name="Hubisz M.J."/>
            <person name="Jaffe D.B."/>
            <person name="Jungreis I."/>
            <person name="Kent W.J."/>
            <person name="Kostka D."/>
            <person name="Lara M."/>
            <person name="Martins A.L."/>
            <person name="Massingham T."/>
            <person name="Moltke I."/>
            <person name="Raney B.J."/>
            <person name="Rasmussen M.D."/>
            <person name="Robinson J."/>
            <person name="Stark A."/>
            <person name="Vilella A.J."/>
            <person name="Wen J."/>
            <person name="Xie X."/>
            <person name="Zody M.C."/>
            <person name="Baldwin J."/>
            <person name="Bloom T."/>
            <person name="Chin C.W."/>
            <person name="Heiman D."/>
            <person name="Nicol R."/>
            <person name="Nusbaum C."/>
            <person name="Young S."/>
            <person name="Wilkinson J."/>
            <person name="Worley K.C."/>
            <person name="Kovar C.L."/>
            <person name="Muzny D.M."/>
            <person name="Gibbs R.A."/>
            <person name="Cree A."/>
            <person name="Dihn H.H."/>
            <person name="Fowler G."/>
            <person name="Jhangiani S."/>
            <person name="Joshi V."/>
            <person name="Lee S."/>
            <person name="Lewis L.R."/>
            <person name="Nazareth L.V."/>
            <person name="Okwuonu G."/>
            <person name="Santibanez J."/>
            <person name="Warren W.C."/>
            <person name="Mardis E.R."/>
            <person name="Weinstock G.M."/>
            <person name="Wilson R.K."/>
            <person name="Delehaunty K."/>
            <person name="Dooling D."/>
            <person name="Fronik C."/>
            <person name="Fulton L."/>
            <person name="Fulton B."/>
            <person name="Graves T."/>
            <person name="Minx P."/>
            <person name="Sodergren E."/>
            <person name="Birney E."/>
            <person name="Margulies E.H."/>
            <person name="Herrero J."/>
            <person name="Green E.D."/>
            <person name="Haussler D."/>
            <person name="Siepel A."/>
            <person name="Goldman N."/>
            <person name="Pollard K.S."/>
            <person name="Pedersen J.S."/>
            <person name="Lander E.S."/>
            <person name="Kellis M."/>
        </authorList>
    </citation>
    <scope>NUCLEOTIDE SEQUENCE [LARGE SCALE GENOMIC DNA]</scope>
    <source>
        <strain>Thorbecke</strain>
    </source>
</reference>
<reference evidence="24 25" key="2">
    <citation type="journal article" date="2013" name="Nature">
        <title>The initiation of mammalian protein synthesis and mRNA scanning mechanism.</title>
        <authorList>
            <person name="Lomakin I.B."/>
            <person name="Steitz T.A."/>
        </authorList>
    </citation>
    <scope>X-RAY CRYSTALLOGRAPHY (7.01 ANGSTROMS) OF 40S RIBOSOME</scope>
    <scope>FUNCTION</scope>
    <scope>SUBUNIT</scope>
    <scope>SUBCELLULAR LOCATION</scope>
</reference>
<reference evidence="22 23" key="3">
    <citation type="journal article" date="2015" name="Mol. Cell">
        <title>Cryo-EM of ribosomal 80S complexes with termination factors reveals the translocated cricket paralysis virus IRES.</title>
        <authorList>
            <person name="Muhs M."/>
            <person name="Hilal T."/>
            <person name="Mielke T."/>
            <person name="Skabkin M.A."/>
            <person name="Sanbonmatsu K.Y."/>
            <person name="Pestova T.V."/>
            <person name="Spahn C.M."/>
        </authorList>
    </citation>
    <scope>STRUCTURE BY ELECTRON MICROSCOPY (9.00 ANGSTROMS) OF RIBOSOME</scope>
    <scope>FUNCTION</scope>
    <scope>SUBUNIT</scope>
    <scope>SUBCELLULAR LOCATION</scope>
</reference>
<reference evidence="20 21" key="4">
    <citation type="journal article" date="2015" name="Nature">
        <title>Structural basis for stop codon recognition in eukaryotes.</title>
        <authorList>
            <person name="Brown A."/>
            <person name="Shao S."/>
            <person name="Murray J."/>
            <person name="Hegde R.S."/>
            <person name="Ramakrishnan V."/>
        </authorList>
    </citation>
    <scope>STRUCTURE BY ELECTRON MICROSCOPY (3.45 ANGSTROMS) OF 9-132 OF RIBOSOME</scope>
    <scope>FUNCTION</scope>
    <scope>SUBUNIT</scope>
    <scope>SUBCELLULAR LOCATION</scope>
</reference>
<reference evidence="26 27" key="5">
    <citation type="journal article" date="2016" name="Cell">
        <title>Decoding mammalian ribosome-mRNA states by translational GTPase complexes.</title>
        <authorList>
            <person name="Shao S."/>
            <person name="Murray J."/>
            <person name="Brown A."/>
            <person name="Taunton J."/>
            <person name="Ramakrishnan V."/>
            <person name="Hegde R.S."/>
        </authorList>
    </citation>
    <scope>STRUCTURE BY ELECTRON MICROSCOPY (3.31 ANGSTROMS) OF RIBOSOME</scope>
    <scope>FUNCTION</scope>
    <scope>SUBUNIT</scope>
    <scope>SUBCELLULAR LOCATION</scope>
</reference>
<reference evidence="30" key="6">
    <citation type="journal article" date="2018" name="Cell Rep.">
        <title>tRNA translocation by the eukaryotic 80S ribosome and the impact of GTP hydrolysis.</title>
        <authorList>
            <person name="Flis J."/>
            <person name="Holm M."/>
            <person name="Rundlet E.J."/>
            <person name="Loerke J."/>
            <person name="Hilal T."/>
            <person name="Dabrowski M."/>
            <person name="Burger J."/>
            <person name="Mielke T."/>
            <person name="Blanchard S.C."/>
            <person name="Spahn C.M.T."/>
            <person name="Budkevich T.V."/>
        </authorList>
    </citation>
    <scope>STRUCTURE BY ELECTRON MICROSCOPY (3.60 ANGSTROMS) OF 11-130 OF RIBOSOME</scope>
    <scope>FUNCTION</scope>
    <scope>SUBCELLULAR LOCATION</scope>
    <scope>SUBUNIT</scope>
</reference>
<reference evidence="28 29" key="7">
    <citation type="journal article" date="2018" name="Elife">
        <title>Dual tRNA mimicry in the Cricket paralysis virus IRES uncovers an unexpected similarity with the Hepatitis C Virus IRES.</title>
        <authorList>
            <person name="Pisareva V.P."/>
            <person name="Pisarev A.V."/>
            <person name="Fernandez I.S."/>
        </authorList>
    </citation>
    <scope>STRUCTURE BY ELECTRON MICROSCOPY (3.20 ANGSTROMS) OF RIBOSOME</scope>
    <scope>SUBCELLULAR LOCATION</scope>
    <scope>SUBUNIT</scope>
</reference>
<reference evidence="33 34" key="8">
    <citation type="journal article" date="2018" name="Elife">
        <title>Structures of translationally inactive mammalian ribosomes.</title>
        <authorList>
            <person name="Brown A."/>
            <person name="Baird M.R."/>
            <person name="Yip M.C."/>
            <person name="Murray J."/>
            <person name="Shao S."/>
        </authorList>
    </citation>
    <scope>STRUCTURE BY ELECTRON MICROSCOPY (3.30 ANGSTROMS) OF 14-130 OF RIBOSOME</scope>
    <scope>SUBCELLULAR LOCATION</scope>
    <scope>SUBUNIT</scope>
</reference>
<reference evidence="31 32" key="9">
    <citation type="journal article" date="2018" name="Mol. Cell">
        <title>ZNF598 is a quality control sensor of collided ribosomes.</title>
        <authorList>
            <person name="Juszkiewicz S."/>
            <person name="Chandrasekaran V."/>
            <person name="Lin Z."/>
            <person name="Kraatz S."/>
            <person name="Ramakrishnan V."/>
            <person name="Hegde R.S."/>
        </authorList>
    </citation>
    <scope>STRUCTURE BY ELECTRON MICROSCOPY (3.80 ANGSTROMS) OF 50-132 OF RIBOSOME</scope>
    <scope>SUBCELLULAR LOCATION</scope>
    <scope>SUBUNIT</scope>
</reference>
<reference evidence="37 38" key="10">
    <citation type="journal article" date="2019" name="Elife">
        <title>Structural and mutational analysis of the ribosome-arresting human XBP1u.</title>
        <authorList>
            <person name="Shanmuganathan V."/>
            <person name="Schiller N."/>
            <person name="Magoulopoulou A."/>
            <person name="Cheng J."/>
            <person name="Braunger K."/>
            <person name="Cymer F."/>
            <person name="Berninghausen O."/>
            <person name="Beatrix B."/>
            <person name="Kohno K."/>
            <person name="von Heijne G."/>
            <person name="Beckmann R."/>
        </authorList>
    </citation>
    <scope>STRUCTURE BY ELECTRON MICROSCOPY (3.00 ANGSTROMS) OF 14-130 OF RIBOSOME</scope>
    <scope>SUBCELLULAR LOCATION</scope>
    <scope>SUBUNIT</scope>
</reference>
<reference evidence="35 36" key="11">
    <citation type="journal article" date="2019" name="EMBO J.">
        <title>The Israeli acute paralysis virus IRES captures host ribosomes by mimicking a ribosomal state with hybrid tRNAs.</title>
        <authorList>
            <person name="Acosta-Reyes F."/>
            <person name="Neupane R."/>
            <person name="Frank J."/>
            <person name="Fernandez I.S."/>
        </authorList>
    </citation>
    <scope>STRUCTURE BY ELECTRON MICROSCOPY (3.10 ANGSTROMS) OF RIBOSOME</scope>
    <scope>SUBCELLULAR LOCATION</scope>
    <scope>SUBUNIT</scope>
</reference>
<reference evidence="39" key="12">
    <citation type="journal article" date="2019" name="Nat. Struct. Mol. Biol.">
        <title>Mechanism of ribosome stalling during translation of a poly(A) tail.</title>
        <authorList>
            <person name="Chandrasekaran V."/>
            <person name="Juszkiewicz S."/>
            <person name="Choi J."/>
            <person name="Puglisi J.D."/>
            <person name="Brown A."/>
            <person name="Shao S."/>
            <person name="Ramakrishnan V."/>
            <person name="Hegde R.S."/>
        </authorList>
    </citation>
    <scope>STRUCTURE BY ELECTRON MICROSCOPY (2.80 ANGSTROMS) OF RIBOSOME</scope>
    <scope>SUBCELLULAR LOCATION</scope>
    <scope>SUBUNIT</scope>
</reference>
<reference evidence="42 43" key="13">
    <citation type="journal article" date="2020" name="Cell Rep.">
        <title>The Halastavi arva virus intergenic region IRES promotes translation by the simplest possible initiation mechanism.</title>
        <authorList>
            <person name="Abaeva I.S."/>
            <person name="Vicens Q."/>
            <person name="Bochler A."/>
            <person name="Soufari H."/>
            <person name="Simonetti A."/>
            <person name="Pestova T.V."/>
            <person name="Hashem Y."/>
            <person name="Hellen C.U.T."/>
        </authorList>
    </citation>
    <scope>STRUCTURE BY ELECTRON MICROSCOPY (3.49 ANGSTROMS) OF 9-132 OF RIBOSOME</scope>
    <scope>SUBCELLULAR LOCATION</scope>
    <scope>SUBUNIT</scope>
</reference>
<reference evidence="40 41" key="14">
    <citation type="journal article" date="2020" name="Elife">
        <title>A complex IRES at the 5'-UTR of a viral mRNA assembles a functional 48S complex via an uAUG intermediate.</title>
        <authorList>
            <person name="Neupane R."/>
            <person name="Pisareva V.P."/>
            <person name="Rodriguez C.F."/>
            <person name="Pisarev A.V."/>
            <person name="Fernandez I.S."/>
        </authorList>
    </citation>
    <scope>STRUCTURE BY ELECTRON MICROSCOPY (3.00 ANGSTROMS) OF RIBOSOME</scope>
    <scope>SUBCELLULAR LOCATION</scope>
    <scope>SUBUNIT</scope>
</reference>
<reference evidence="44 45 46 47" key="15">
    <citation type="journal article" date="2022" name="EMBO J.">
        <title>Molecular architecture of 40S translation initiation complexes on the hepatitis C virus IRES.</title>
        <authorList>
            <person name="Brown Z.P."/>
            <person name="Abaeva I.S."/>
            <person name="De S."/>
            <person name="Hellen C.U.T."/>
            <person name="Pestova T.V."/>
            <person name="Frank J."/>
        </authorList>
    </citation>
    <scope>STRUCTURE BY ELECTRON MICROSCOPY (3.50 ANGSTROMS) OF RIBOSOME</scope>
    <scope>SUBCELLULAR LOCATION</scope>
    <scope>SUBUNIT</scope>
</reference>
<reference evidence="48 49" key="16">
    <citation type="journal article" date="2022" name="Science">
        <title>Structure of the mammalian ribosome as it decodes the selenocysteine UGA codon.</title>
        <authorList>
            <person name="Hilal T."/>
            <person name="Killam B.Y."/>
            <person name="Grozdanovic M."/>
            <person name="Dobosz-Bartoszek M."/>
            <person name="Loerke J."/>
            <person name="Buerger J."/>
            <person name="Mielke T."/>
            <person name="Copeland P.R."/>
            <person name="Simonovic M."/>
            <person name="Spahn C.M.T."/>
        </authorList>
    </citation>
    <scope>STRUCTURE BY ELECTRON MICROSCOPY (2.80 ANGSTROMS) OF RIBOSOME</scope>
    <scope>SUBCELLULAR LOCATION</scope>
    <scope>SUBUNIT</scope>
</reference>
<feature type="initiator methionine" description="Removed" evidence="1">
    <location>
        <position position="1"/>
    </location>
</feature>
<feature type="chain" id="PRO_0000460061" description="Small ribosomal subunit protein eS12">
    <location>
        <begin position="2"/>
        <end position="132"/>
    </location>
</feature>
<feature type="modified residue" description="N-acetylalanine" evidence="1">
    <location>
        <position position="2"/>
    </location>
</feature>
<feature type="modified residue" description="N6-succinyllysine" evidence="2">
    <location>
        <position position="129"/>
    </location>
</feature>
<feature type="helix" evidence="53">
    <location>
        <begin position="16"/>
        <end position="18"/>
    </location>
</feature>
<feature type="turn" evidence="53">
    <location>
        <begin position="22"/>
        <end position="29"/>
    </location>
</feature>
<feature type="strand" evidence="53">
    <location>
        <begin position="32"/>
        <end position="34"/>
    </location>
</feature>
<feature type="helix" evidence="53">
    <location>
        <begin position="35"/>
        <end position="42"/>
    </location>
</feature>
<feature type="turn" evidence="53">
    <location>
        <begin position="43"/>
        <end position="45"/>
    </location>
</feature>
<feature type="strand" evidence="53">
    <location>
        <begin position="49"/>
        <end position="52"/>
    </location>
</feature>
<feature type="strand" evidence="50">
    <location>
        <begin position="55"/>
        <end position="57"/>
    </location>
</feature>
<feature type="helix" evidence="53">
    <location>
        <begin position="61"/>
        <end position="64"/>
    </location>
</feature>
<feature type="helix" evidence="53">
    <location>
        <begin position="65"/>
        <end position="67"/>
    </location>
</feature>
<feature type="strand" evidence="53">
    <location>
        <begin position="71"/>
        <end position="73"/>
    </location>
</feature>
<feature type="strand" evidence="53">
    <location>
        <begin position="75"/>
        <end position="77"/>
    </location>
</feature>
<feature type="strand" evidence="54">
    <location>
        <begin position="78"/>
        <end position="80"/>
    </location>
</feature>
<feature type="strand" evidence="53">
    <location>
        <begin position="82"/>
        <end position="85"/>
    </location>
</feature>
<feature type="turn" evidence="53">
    <location>
        <begin position="86"/>
        <end position="90"/>
    </location>
</feature>
<feature type="strand" evidence="52">
    <location>
        <begin position="91"/>
        <end position="95"/>
    </location>
</feature>
<feature type="strand" evidence="51">
    <location>
        <begin position="96"/>
        <end position="98"/>
    </location>
</feature>
<feature type="strand" evidence="53">
    <location>
        <begin position="108"/>
        <end position="111"/>
    </location>
</feature>
<feature type="strand" evidence="55">
    <location>
        <begin position="115"/>
        <end position="117"/>
    </location>
</feature>
<feature type="turn" evidence="53">
    <location>
        <begin position="119"/>
        <end position="122"/>
    </location>
</feature>
<feature type="helix" evidence="53">
    <location>
        <begin position="123"/>
        <end position="128"/>
    </location>
</feature>
<accession>G1SFR8</accession>